<evidence type="ECO:0000255" key="1">
    <source>
        <dbReference type="HAMAP-Rule" id="MF_00210"/>
    </source>
</evidence>
<accession>Q255H3</accession>
<dbReference type="EC" id="2.5.1.19" evidence="1"/>
<dbReference type="EMBL" id="AP006861">
    <property type="protein sequence ID" value="BAE81065.1"/>
    <property type="molecule type" value="Genomic_DNA"/>
</dbReference>
<dbReference type="RefSeq" id="WP_011457846.1">
    <property type="nucleotide sequence ID" value="NC_007899.1"/>
</dbReference>
<dbReference type="SMR" id="Q255H3"/>
<dbReference type="STRING" id="264202.CF0293"/>
<dbReference type="KEGG" id="cfe:CF0293"/>
<dbReference type="eggNOG" id="COG0128">
    <property type="taxonomic scope" value="Bacteria"/>
</dbReference>
<dbReference type="HOGENOM" id="CLU_024321_0_0_0"/>
<dbReference type="OrthoDB" id="9809920at2"/>
<dbReference type="UniPathway" id="UPA00053">
    <property type="reaction ID" value="UER00089"/>
</dbReference>
<dbReference type="Proteomes" id="UP000001260">
    <property type="component" value="Chromosome"/>
</dbReference>
<dbReference type="GO" id="GO:0005737">
    <property type="term" value="C:cytoplasm"/>
    <property type="evidence" value="ECO:0007669"/>
    <property type="project" value="UniProtKB-SubCell"/>
</dbReference>
<dbReference type="GO" id="GO:0003866">
    <property type="term" value="F:3-phosphoshikimate 1-carboxyvinyltransferase activity"/>
    <property type="evidence" value="ECO:0007669"/>
    <property type="project" value="UniProtKB-UniRule"/>
</dbReference>
<dbReference type="GO" id="GO:0008652">
    <property type="term" value="P:amino acid biosynthetic process"/>
    <property type="evidence" value="ECO:0007669"/>
    <property type="project" value="UniProtKB-KW"/>
</dbReference>
<dbReference type="GO" id="GO:0009073">
    <property type="term" value="P:aromatic amino acid family biosynthetic process"/>
    <property type="evidence" value="ECO:0007669"/>
    <property type="project" value="UniProtKB-KW"/>
</dbReference>
<dbReference type="GO" id="GO:0009423">
    <property type="term" value="P:chorismate biosynthetic process"/>
    <property type="evidence" value="ECO:0007669"/>
    <property type="project" value="UniProtKB-UniRule"/>
</dbReference>
<dbReference type="CDD" id="cd01556">
    <property type="entry name" value="EPSP_synthase"/>
    <property type="match status" value="1"/>
</dbReference>
<dbReference type="Gene3D" id="3.65.10.10">
    <property type="entry name" value="Enolpyruvate transferase domain"/>
    <property type="match status" value="2"/>
</dbReference>
<dbReference type="HAMAP" id="MF_00210">
    <property type="entry name" value="EPSP_synth"/>
    <property type="match status" value="1"/>
</dbReference>
<dbReference type="InterPro" id="IPR001986">
    <property type="entry name" value="Enolpyruvate_Tfrase_dom"/>
</dbReference>
<dbReference type="InterPro" id="IPR036968">
    <property type="entry name" value="Enolpyruvate_Tfrase_sf"/>
</dbReference>
<dbReference type="InterPro" id="IPR006264">
    <property type="entry name" value="EPSP_synthase"/>
</dbReference>
<dbReference type="InterPro" id="IPR023193">
    <property type="entry name" value="EPSP_synthase_CS"/>
</dbReference>
<dbReference type="InterPro" id="IPR013792">
    <property type="entry name" value="RNA3'P_cycl/enolpyr_Trfase_a/b"/>
</dbReference>
<dbReference type="NCBIfam" id="TIGR01356">
    <property type="entry name" value="aroA"/>
    <property type="match status" value="1"/>
</dbReference>
<dbReference type="PANTHER" id="PTHR21090">
    <property type="entry name" value="AROM/DEHYDROQUINATE SYNTHASE"/>
    <property type="match status" value="1"/>
</dbReference>
<dbReference type="PANTHER" id="PTHR21090:SF5">
    <property type="entry name" value="PENTAFUNCTIONAL AROM POLYPEPTIDE"/>
    <property type="match status" value="1"/>
</dbReference>
<dbReference type="Pfam" id="PF00275">
    <property type="entry name" value="EPSP_synthase"/>
    <property type="match status" value="1"/>
</dbReference>
<dbReference type="PIRSF" id="PIRSF000505">
    <property type="entry name" value="EPSPS"/>
    <property type="match status" value="1"/>
</dbReference>
<dbReference type="SUPFAM" id="SSF55205">
    <property type="entry name" value="EPT/RTPC-like"/>
    <property type="match status" value="1"/>
</dbReference>
<dbReference type="PROSITE" id="PS00885">
    <property type="entry name" value="EPSP_SYNTHASE_2"/>
    <property type="match status" value="1"/>
</dbReference>
<name>AROA_CHLFF</name>
<sequence>MLAYKISPSSISGSVCVPPSKSHTLRAIFLASIAQGTSTIYNALTSPDSEAMIQACEQLGAKIQKKSSFLEITGTPHLSLPPNTIINAGSSGIVFRFFTALAAIFSEKVTITGSSQLQRRPIAPLIHALENFGATFSYEGAPYTLSFTVSGPISSGYTEVSGDDSQYASALAMACSLAEGPFSFTIVNPKERPWFDLTLWWLEQLAMPYSQSGDTYSFLGKSRPRTFSYTVGGDFSSAAFLAAAALLSKSPHPTYLNDLNSNDAQGDKELFYLLQKLGADITFENDSVIVFSSTFSGGNIDMDPFIDALPILAVLCCFATSPSHLYNARGAKDKESDRIIAITEELQKMGACIQPCHNGLLINPSPLYGASMHSHNDHRIAMALSVAAMNASGDSIIHDTECVKKTFPNFIQALNSLHANVQEHHEHISMRAANSRQDLVRQGFC</sequence>
<reference key="1">
    <citation type="journal article" date="2006" name="DNA Res.">
        <title>Genome sequence of the cat pathogen, Chlamydophila felis.</title>
        <authorList>
            <person name="Azuma Y."/>
            <person name="Hirakawa H."/>
            <person name="Yamashita A."/>
            <person name="Cai Y."/>
            <person name="Rahman M.A."/>
            <person name="Suzuki H."/>
            <person name="Mitaku S."/>
            <person name="Toh H."/>
            <person name="Goto S."/>
            <person name="Murakami T."/>
            <person name="Sugi K."/>
            <person name="Hayashi H."/>
            <person name="Fukushi H."/>
            <person name="Hattori M."/>
            <person name="Kuhara S."/>
            <person name="Shirai M."/>
        </authorList>
    </citation>
    <scope>NUCLEOTIDE SEQUENCE [LARGE SCALE GENOMIC DNA]</scope>
    <source>
        <strain>Fe/C-56</strain>
    </source>
</reference>
<feature type="chain" id="PRO_1000012425" description="3-phosphoshikimate 1-carboxyvinyltransferase">
    <location>
        <begin position="1"/>
        <end position="445"/>
    </location>
</feature>
<feature type="active site" description="Proton acceptor" evidence="1">
    <location>
        <position position="307"/>
    </location>
</feature>
<feature type="binding site" evidence="1">
    <location>
        <position position="21"/>
    </location>
    <ligand>
        <name>3-phosphoshikimate</name>
        <dbReference type="ChEBI" id="CHEBI:145989"/>
    </ligand>
</feature>
<feature type="binding site" evidence="1">
    <location>
        <position position="21"/>
    </location>
    <ligand>
        <name>phosphoenolpyruvate</name>
        <dbReference type="ChEBI" id="CHEBI:58702"/>
    </ligand>
</feature>
<feature type="binding site" evidence="1">
    <location>
        <position position="22"/>
    </location>
    <ligand>
        <name>3-phosphoshikimate</name>
        <dbReference type="ChEBI" id="CHEBI:145989"/>
    </ligand>
</feature>
<feature type="binding site" evidence="1">
    <location>
        <position position="26"/>
    </location>
    <ligand>
        <name>3-phosphoshikimate</name>
        <dbReference type="ChEBI" id="CHEBI:145989"/>
    </ligand>
</feature>
<feature type="binding site" evidence="1">
    <location>
        <position position="92"/>
    </location>
    <ligand>
        <name>phosphoenolpyruvate</name>
        <dbReference type="ChEBI" id="CHEBI:58702"/>
    </ligand>
</feature>
<feature type="binding site" evidence="1">
    <location>
        <position position="120"/>
    </location>
    <ligand>
        <name>phosphoenolpyruvate</name>
        <dbReference type="ChEBI" id="CHEBI:58702"/>
    </ligand>
</feature>
<feature type="binding site" evidence="1">
    <location>
        <position position="165"/>
    </location>
    <ligand>
        <name>3-phosphoshikimate</name>
        <dbReference type="ChEBI" id="CHEBI:145989"/>
    </ligand>
</feature>
<feature type="binding site" evidence="1">
    <location>
        <position position="166"/>
    </location>
    <ligand>
        <name>3-phosphoshikimate</name>
        <dbReference type="ChEBI" id="CHEBI:145989"/>
    </ligand>
</feature>
<feature type="binding site" evidence="1">
    <location>
        <position position="166"/>
    </location>
    <ligand>
        <name>phosphoenolpyruvate</name>
        <dbReference type="ChEBI" id="CHEBI:58702"/>
    </ligand>
</feature>
<feature type="binding site" evidence="1">
    <location>
        <position position="307"/>
    </location>
    <ligand>
        <name>3-phosphoshikimate</name>
        <dbReference type="ChEBI" id="CHEBI:145989"/>
    </ligand>
</feature>
<feature type="binding site" evidence="1">
    <location>
        <position position="334"/>
    </location>
    <ligand>
        <name>3-phosphoshikimate</name>
        <dbReference type="ChEBI" id="CHEBI:145989"/>
    </ligand>
</feature>
<feature type="binding site" evidence="1">
    <location>
        <position position="338"/>
    </location>
    <ligand>
        <name>phosphoenolpyruvate</name>
        <dbReference type="ChEBI" id="CHEBI:58702"/>
    </ligand>
</feature>
<feature type="binding site" evidence="1">
    <location>
        <position position="379"/>
    </location>
    <ligand>
        <name>phosphoenolpyruvate</name>
        <dbReference type="ChEBI" id="CHEBI:58702"/>
    </ligand>
</feature>
<feature type="binding site" evidence="1">
    <location>
        <position position="405"/>
    </location>
    <ligand>
        <name>phosphoenolpyruvate</name>
        <dbReference type="ChEBI" id="CHEBI:58702"/>
    </ligand>
</feature>
<protein>
    <recommendedName>
        <fullName evidence="1">3-phosphoshikimate 1-carboxyvinyltransferase</fullName>
        <ecNumber evidence="1">2.5.1.19</ecNumber>
    </recommendedName>
    <alternativeName>
        <fullName evidence="1">5-enolpyruvylshikimate-3-phosphate synthase</fullName>
        <shortName evidence="1">EPSP synthase</shortName>
        <shortName evidence="1">EPSPS</shortName>
    </alternativeName>
</protein>
<gene>
    <name evidence="1" type="primary">aroA</name>
    <name type="ordered locus">CF0293</name>
</gene>
<organism>
    <name type="scientific">Chlamydia felis (strain Fe/C-56)</name>
    <name type="common">Chlamydophila felis</name>
    <dbReference type="NCBI Taxonomy" id="264202"/>
    <lineage>
        <taxon>Bacteria</taxon>
        <taxon>Pseudomonadati</taxon>
        <taxon>Chlamydiota</taxon>
        <taxon>Chlamydiia</taxon>
        <taxon>Chlamydiales</taxon>
        <taxon>Chlamydiaceae</taxon>
        <taxon>Chlamydia/Chlamydophila group</taxon>
        <taxon>Chlamydia</taxon>
    </lineage>
</organism>
<comment type="function">
    <text evidence="1">Catalyzes the transfer of the enolpyruvyl moiety of phosphoenolpyruvate (PEP) to the 5-hydroxyl of shikimate-3-phosphate (S3P) to produce enolpyruvyl shikimate-3-phosphate and inorganic phosphate.</text>
</comment>
<comment type="catalytic activity">
    <reaction evidence="1">
        <text>3-phosphoshikimate + phosphoenolpyruvate = 5-O-(1-carboxyvinyl)-3-phosphoshikimate + phosphate</text>
        <dbReference type="Rhea" id="RHEA:21256"/>
        <dbReference type="ChEBI" id="CHEBI:43474"/>
        <dbReference type="ChEBI" id="CHEBI:57701"/>
        <dbReference type="ChEBI" id="CHEBI:58702"/>
        <dbReference type="ChEBI" id="CHEBI:145989"/>
        <dbReference type="EC" id="2.5.1.19"/>
    </reaction>
    <physiologicalReaction direction="left-to-right" evidence="1">
        <dbReference type="Rhea" id="RHEA:21257"/>
    </physiologicalReaction>
</comment>
<comment type="pathway">
    <text evidence="1">Metabolic intermediate biosynthesis; chorismate biosynthesis; chorismate from D-erythrose 4-phosphate and phosphoenolpyruvate: step 6/7.</text>
</comment>
<comment type="subunit">
    <text evidence="1">Monomer.</text>
</comment>
<comment type="subcellular location">
    <subcellularLocation>
        <location evidence="1">Cytoplasm</location>
    </subcellularLocation>
</comment>
<comment type="similarity">
    <text evidence="1">Belongs to the EPSP synthase family.</text>
</comment>
<keyword id="KW-0028">Amino-acid biosynthesis</keyword>
<keyword id="KW-0057">Aromatic amino acid biosynthesis</keyword>
<keyword id="KW-0963">Cytoplasm</keyword>
<keyword id="KW-0808">Transferase</keyword>
<proteinExistence type="inferred from homology"/>